<evidence type="ECO:0000255" key="1">
    <source>
        <dbReference type="HAMAP-Rule" id="MF_00183"/>
    </source>
</evidence>
<sequence>MQRMVILGATGSIGSSTLSVIESNPDAYSVYALVANTSVEKMLALCETHRPQIAHMVDGQAAKSLKQRLPTSLNVEITTGEDQLIDIVSASCVDSVMAAIVGAAGLVPTLAAVKAGKRVLLANKESLVMSGRLFIDEMRRSGARVLPVDSEHNAIYQALPESLQSNIGYCELEKAGVSHILLTGSGGPFLTSELASLASMTPAQACKHPNWSMGRKISVDSATMMNKGLEYIEARWLFNAADDQLKVVIHPQSVIHSMVQYLDGSVLAQLGNPDMRTPIAHCMAYPQRIQSGVEPLDFFKVGQLSFSEPDFNRFPCLALAMEACKQGQEATTVVNAANEISVQAFLENKIKFTDIAKVNEACLSQVAPQSLNSIEDIIRLDLQSRTYAAEWVKKI</sequence>
<name>DXR_SHESH</name>
<proteinExistence type="inferred from homology"/>
<reference key="1">
    <citation type="submission" date="2007-08" db="EMBL/GenBank/DDBJ databases">
        <title>Complete sequence of Shewanella sediminis HAW-EB3.</title>
        <authorList>
            <consortium name="US DOE Joint Genome Institute"/>
            <person name="Copeland A."/>
            <person name="Lucas S."/>
            <person name="Lapidus A."/>
            <person name="Barry K."/>
            <person name="Glavina del Rio T."/>
            <person name="Dalin E."/>
            <person name="Tice H."/>
            <person name="Pitluck S."/>
            <person name="Chertkov O."/>
            <person name="Brettin T."/>
            <person name="Bruce D."/>
            <person name="Detter J.C."/>
            <person name="Han C."/>
            <person name="Schmutz J."/>
            <person name="Larimer F."/>
            <person name="Land M."/>
            <person name="Hauser L."/>
            <person name="Kyrpides N."/>
            <person name="Kim E."/>
            <person name="Zhao J.-S."/>
            <person name="Richardson P."/>
        </authorList>
    </citation>
    <scope>NUCLEOTIDE SEQUENCE [LARGE SCALE GENOMIC DNA]</scope>
    <source>
        <strain>HAW-EB3</strain>
    </source>
</reference>
<dbReference type="EC" id="1.1.1.267" evidence="1"/>
<dbReference type="EMBL" id="CP000821">
    <property type="protein sequence ID" value="ABV37759.1"/>
    <property type="molecule type" value="Genomic_DNA"/>
</dbReference>
<dbReference type="RefSeq" id="WP_012143489.1">
    <property type="nucleotide sequence ID" value="NC_009831.1"/>
</dbReference>
<dbReference type="SMR" id="A8FY36"/>
<dbReference type="STRING" id="425104.Ssed_3155"/>
<dbReference type="KEGG" id="sse:Ssed_3155"/>
<dbReference type="eggNOG" id="COG0743">
    <property type="taxonomic scope" value="Bacteria"/>
</dbReference>
<dbReference type="HOGENOM" id="CLU_035714_4_0_6"/>
<dbReference type="OrthoDB" id="9806546at2"/>
<dbReference type="UniPathway" id="UPA00056">
    <property type="reaction ID" value="UER00092"/>
</dbReference>
<dbReference type="Proteomes" id="UP000002015">
    <property type="component" value="Chromosome"/>
</dbReference>
<dbReference type="GO" id="GO:0030604">
    <property type="term" value="F:1-deoxy-D-xylulose-5-phosphate reductoisomerase activity"/>
    <property type="evidence" value="ECO:0007669"/>
    <property type="project" value="UniProtKB-UniRule"/>
</dbReference>
<dbReference type="GO" id="GO:0030145">
    <property type="term" value="F:manganese ion binding"/>
    <property type="evidence" value="ECO:0007669"/>
    <property type="project" value="TreeGrafter"/>
</dbReference>
<dbReference type="GO" id="GO:0070402">
    <property type="term" value="F:NADPH binding"/>
    <property type="evidence" value="ECO:0007669"/>
    <property type="project" value="InterPro"/>
</dbReference>
<dbReference type="GO" id="GO:0051484">
    <property type="term" value="P:isopentenyl diphosphate biosynthetic process, methylerythritol 4-phosphate pathway involved in terpenoid biosynthetic process"/>
    <property type="evidence" value="ECO:0007669"/>
    <property type="project" value="TreeGrafter"/>
</dbReference>
<dbReference type="FunFam" id="1.10.1740.10:FF:000004">
    <property type="entry name" value="1-deoxy-D-xylulose 5-phosphate reductoisomerase"/>
    <property type="match status" value="1"/>
</dbReference>
<dbReference type="FunFam" id="3.40.50.720:FF:000045">
    <property type="entry name" value="1-deoxy-D-xylulose 5-phosphate reductoisomerase"/>
    <property type="match status" value="1"/>
</dbReference>
<dbReference type="Gene3D" id="1.10.1740.10">
    <property type="match status" value="1"/>
</dbReference>
<dbReference type="Gene3D" id="3.40.50.720">
    <property type="entry name" value="NAD(P)-binding Rossmann-like Domain"/>
    <property type="match status" value="1"/>
</dbReference>
<dbReference type="HAMAP" id="MF_00183">
    <property type="entry name" value="DXP_reductoisom"/>
    <property type="match status" value="1"/>
</dbReference>
<dbReference type="InterPro" id="IPR003821">
    <property type="entry name" value="DXP_reductoisomerase"/>
</dbReference>
<dbReference type="InterPro" id="IPR013644">
    <property type="entry name" value="DXP_reductoisomerase_C"/>
</dbReference>
<dbReference type="InterPro" id="IPR013512">
    <property type="entry name" value="DXP_reductoisomerase_N"/>
</dbReference>
<dbReference type="InterPro" id="IPR026877">
    <property type="entry name" value="DXPR_C"/>
</dbReference>
<dbReference type="InterPro" id="IPR036169">
    <property type="entry name" value="DXPR_C_sf"/>
</dbReference>
<dbReference type="InterPro" id="IPR036291">
    <property type="entry name" value="NAD(P)-bd_dom_sf"/>
</dbReference>
<dbReference type="NCBIfam" id="TIGR00243">
    <property type="entry name" value="Dxr"/>
    <property type="match status" value="1"/>
</dbReference>
<dbReference type="NCBIfam" id="NF003938">
    <property type="entry name" value="PRK05447.1-1"/>
    <property type="match status" value="1"/>
</dbReference>
<dbReference type="NCBIfam" id="NF009114">
    <property type="entry name" value="PRK12464.1"/>
    <property type="match status" value="1"/>
</dbReference>
<dbReference type="PANTHER" id="PTHR30525">
    <property type="entry name" value="1-DEOXY-D-XYLULOSE 5-PHOSPHATE REDUCTOISOMERASE"/>
    <property type="match status" value="1"/>
</dbReference>
<dbReference type="PANTHER" id="PTHR30525:SF0">
    <property type="entry name" value="1-DEOXY-D-XYLULOSE 5-PHOSPHATE REDUCTOISOMERASE, CHLOROPLASTIC"/>
    <property type="match status" value="1"/>
</dbReference>
<dbReference type="Pfam" id="PF08436">
    <property type="entry name" value="DXP_redisom_C"/>
    <property type="match status" value="1"/>
</dbReference>
<dbReference type="Pfam" id="PF02670">
    <property type="entry name" value="DXP_reductoisom"/>
    <property type="match status" value="1"/>
</dbReference>
<dbReference type="Pfam" id="PF13288">
    <property type="entry name" value="DXPR_C"/>
    <property type="match status" value="1"/>
</dbReference>
<dbReference type="PIRSF" id="PIRSF006205">
    <property type="entry name" value="Dxp_reductismrs"/>
    <property type="match status" value="1"/>
</dbReference>
<dbReference type="SUPFAM" id="SSF69055">
    <property type="entry name" value="1-deoxy-D-xylulose-5-phosphate reductoisomerase, C-terminal domain"/>
    <property type="match status" value="1"/>
</dbReference>
<dbReference type="SUPFAM" id="SSF55347">
    <property type="entry name" value="Glyceraldehyde-3-phosphate dehydrogenase-like, C-terminal domain"/>
    <property type="match status" value="1"/>
</dbReference>
<dbReference type="SUPFAM" id="SSF51735">
    <property type="entry name" value="NAD(P)-binding Rossmann-fold domains"/>
    <property type="match status" value="1"/>
</dbReference>
<feature type="chain" id="PRO_1000077345" description="1-deoxy-D-xylulose 5-phosphate reductoisomerase">
    <location>
        <begin position="1"/>
        <end position="395"/>
    </location>
</feature>
<feature type="binding site" evidence="1">
    <location>
        <position position="10"/>
    </location>
    <ligand>
        <name>NADPH</name>
        <dbReference type="ChEBI" id="CHEBI:57783"/>
    </ligand>
</feature>
<feature type="binding site" evidence="1">
    <location>
        <position position="11"/>
    </location>
    <ligand>
        <name>NADPH</name>
        <dbReference type="ChEBI" id="CHEBI:57783"/>
    </ligand>
</feature>
<feature type="binding site" evidence="1">
    <location>
        <position position="12"/>
    </location>
    <ligand>
        <name>NADPH</name>
        <dbReference type="ChEBI" id="CHEBI:57783"/>
    </ligand>
</feature>
<feature type="binding site" evidence="1">
    <location>
        <position position="13"/>
    </location>
    <ligand>
        <name>NADPH</name>
        <dbReference type="ChEBI" id="CHEBI:57783"/>
    </ligand>
</feature>
<feature type="binding site" evidence="1">
    <location>
        <position position="123"/>
    </location>
    <ligand>
        <name>NADPH</name>
        <dbReference type="ChEBI" id="CHEBI:57783"/>
    </ligand>
</feature>
<feature type="binding site" evidence="1">
    <location>
        <position position="124"/>
    </location>
    <ligand>
        <name>1-deoxy-D-xylulose 5-phosphate</name>
        <dbReference type="ChEBI" id="CHEBI:57792"/>
    </ligand>
</feature>
<feature type="binding site" evidence="1">
    <location>
        <position position="125"/>
    </location>
    <ligand>
        <name>NADPH</name>
        <dbReference type="ChEBI" id="CHEBI:57783"/>
    </ligand>
</feature>
<feature type="binding site" evidence="1">
    <location>
        <position position="149"/>
    </location>
    <ligand>
        <name>Mn(2+)</name>
        <dbReference type="ChEBI" id="CHEBI:29035"/>
    </ligand>
</feature>
<feature type="binding site" evidence="1">
    <location>
        <position position="150"/>
    </location>
    <ligand>
        <name>1-deoxy-D-xylulose 5-phosphate</name>
        <dbReference type="ChEBI" id="CHEBI:57792"/>
    </ligand>
</feature>
<feature type="binding site" evidence="1">
    <location>
        <position position="151"/>
    </location>
    <ligand>
        <name>1-deoxy-D-xylulose 5-phosphate</name>
        <dbReference type="ChEBI" id="CHEBI:57792"/>
    </ligand>
</feature>
<feature type="binding site" evidence="1">
    <location>
        <position position="151"/>
    </location>
    <ligand>
        <name>Mn(2+)</name>
        <dbReference type="ChEBI" id="CHEBI:29035"/>
    </ligand>
</feature>
<feature type="binding site" evidence="1">
    <location>
        <position position="185"/>
    </location>
    <ligand>
        <name>1-deoxy-D-xylulose 5-phosphate</name>
        <dbReference type="ChEBI" id="CHEBI:57792"/>
    </ligand>
</feature>
<feature type="binding site" evidence="1">
    <location>
        <position position="208"/>
    </location>
    <ligand>
        <name>1-deoxy-D-xylulose 5-phosphate</name>
        <dbReference type="ChEBI" id="CHEBI:57792"/>
    </ligand>
</feature>
<feature type="binding site" evidence="1">
    <location>
        <position position="214"/>
    </location>
    <ligand>
        <name>NADPH</name>
        <dbReference type="ChEBI" id="CHEBI:57783"/>
    </ligand>
</feature>
<feature type="binding site" evidence="1">
    <location>
        <position position="221"/>
    </location>
    <ligand>
        <name>1-deoxy-D-xylulose 5-phosphate</name>
        <dbReference type="ChEBI" id="CHEBI:57792"/>
    </ligand>
</feature>
<feature type="binding site" evidence="1">
    <location>
        <position position="226"/>
    </location>
    <ligand>
        <name>1-deoxy-D-xylulose 5-phosphate</name>
        <dbReference type="ChEBI" id="CHEBI:57792"/>
    </ligand>
</feature>
<feature type="binding site" evidence="1">
    <location>
        <position position="227"/>
    </location>
    <ligand>
        <name>1-deoxy-D-xylulose 5-phosphate</name>
        <dbReference type="ChEBI" id="CHEBI:57792"/>
    </ligand>
</feature>
<feature type="binding site" evidence="1">
    <location>
        <position position="230"/>
    </location>
    <ligand>
        <name>1-deoxy-D-xylulose 5-phosphate</name>
        <dbReference type="ChEBI" id="CHEBI:57792"/>
    </ligand>
</feature>
<feature type="binding site" evidence="1">
    <location>
        <position position="230"/>
    </location>
    <ligand>
        <name>Mn(2+)</name>
        <dbReference type="ChEBI" id="CHEBI:29035"/>
    </ligand>
</feature>
<comment type="function">
    <text evidence="1">Catalyzes the NADPH-dependent rearrangement and reduction of 1-deoxy-D-xylulose-5-phosphate (DXP) to 2-C-methyl-D-erythritol 4-phosphate (MEP).</text>
</comment>
<comment type="catalytic activity">
    <reaction evidence="1">
        <text>2-C-methyl-D-erythritol 4-phosphate + NADP(+) = 1-deoxy-D-xylulose 5-phosphate + NADPH + H(+)</text>
        <dbReference type="Rhea" id="RHEA:13717"/>
        <dbReference type="ChEBI" id="CHEBI:15378"/>
        <dbReference type="ChEBI" id="CHEBI:57783"/>
        <dbReference type="ChEBI" id="CHEBI:57792"/>
        <dbReference type="ChEBI" id="CHEBI:58262"/>
        <dbReference type="ChEBI" id="CHEBI:58349"/>
        <dbReference type="EC" id="1.1.1.267"/>
    </reaction>
    <physiologicalReaction direction="right-to-left" evidence="1">
        <dbReference type="Rhea" id="RHEA:13719"/>
    </physiologicalReaction>
</comment>
<comment type="cofactor">
    <cofactor evidence="1">
        <name>Mg(2+)</name>
        <dbReference type="ChEBI" id="CHEBI:18420"/>
    </cofactor>
    <cofactor evidence="1">
        <name>Mn(2+)</name>
        <dbReference type="ChEBI" id="CHEBI:29035"/>
    </cofactor>
</comment>
<comment type="pathway">
    <text evidence="1">Isoprenoid biosynthesis; isopentenyl diphosphate biosynthesis via DXP pathway; isopentenyl diphosphate from 1-deoxy-D-xylulose 5-phosphate: step 1/6.</text>
</comment>
<comment type="similarity">
    <text evidence="1">Belongs to the DXR family.</text>
</comment>
<accession>A8FY36</accession>
<organism>
    <name type="scientific">Shewanella sediminis (strain HAW-EB3)</name>
    <dbReference type="NCBI Taxonomy" id="425104"/>
    <lineage>
        <taxon>Bacteria</taxon>
        <taxon>Pseudomonadati</taxon>
        <taxon>Pseudomonadota</taxon>
        <taxon>Gammaproteobacteria</taxon>
        <taxon>Alteromonadales</taxon>
        <taxon>Shewanellaceae</taxon>
        <taxon>Shewanella</taxon>
    </lineage>
</organism>
<gene>
    <name evidence="1" type="primary">dxr</name>
    <name type="ordered locus">Ssed_3155</name>
</gene>
<keyword id="KW-0414">Isoprene biosynthesis</keyword>
<keyword id="KW-0464">Manganese</keyword>
<keyword id="KW-0479">Metal-binding</keyword>
<keyword id="KW-0521">NADP</keyword>
<keyword id="KW-0560">Oxidoreductase</keyword>
<keyword id="KW-1185">Reference proteome</keyword>
<protein>
    <recommendedName>
        <fullName evidence="1">1-deoxy-D-xylulose 5-phosphate reductoisomerase</fullName>
        <shortName evidence="1">DXP reductoisomerase</shortName>
        <ecNumber evidence="1">1.1.1.267</ecNumber>
    </recommendedName>
    <alternativeName>
        <fullName evidence="1">1-deoxyxylulose-5-phosphate reductoisomerase</fullName>
    </alternativeName>
    <alternativeName>
        <fullName evidence="1">2-C-methyl-D-erythritol 4-phosphate synthase</fullName>
    </alternativeName>
</protein>